<proteinExistence type="inferred from homology"/>
<accession>B4QFD2</accession>
<protein>
    <recommendedName>
        <fullName evidence="1">Eukaryotic translation initiation factor 3 subunit M</fullName>
        <shortName evidence="1">eIF3m</shortName>
    </recommendedName>
    <alternativeName>
        <fullName evidence="1">Transport and Golgi organization protein 7</fullName>
        <shortName evidence="1">Tango-7</shortName>
    </alternativeName>
</protein>
<comment type="function">
    <text evidence="1">Component of the eukaryotic translation initiation factor 3 (eIF-3) complex, which is involved in protein synthesis of a specialized repertoire of mRNAs and, together with other initiation factors, stimulates binding of mRNA and methionyl-tRNAi to the 40S ribosome. The eIF-3 complex specifically targets and initiates translation of a subset of mRNAs involved in cell proliferation.</text>
</comment>
<comment type="subunit">
    <text evidence="1">Component of the eukaryotic translation initiation factor 3 (eIF-3) complex. The eIF-3 complex interacts with pix.</text>
</comment>
<comment type="subcellular location">
    <subcellularLocation>
        <location evidence="1">Cytoplasm</location>
    </subcellularLocation>
    <subcellularLocation>
        <location evidence="1">Golgi apparatus</location>
    </subcellularLocation>
</comment>
<comment type="similarity">
    <text evidence="1">Belongs to the eIF-3 subunit M family.</text>
</comment>
<organism>
    <name type="scientific">Drosophila simulans</name>
    <name type="common">Fruit fly</name>
    <dbReference type="NCBI Taxonomy" id="7240"/>
    <lineage>
        <taxon>Eukaryota</taxon>
        <taxon>Metazoa</taxon>
        <taxon>Ecdysozoa</taxon>
        <taxon>Arthropoda</taxon>
        <taxon>Hexapoda</taxon>
        <taxon>Insecta</taxon>
        <taxon>Pterygota</taxon>
        <taxon>Neoptera</taxon>
        <taxon>Endopterygota</taxon>
        <taxon>Diptera</taxon>
        <taxon>Brachycera</taxon>
        <taxon>Muscomorpha</taxon>
        <taxon>Ephydroidea</taxon>
        <taxon>Drosophilidae</taxon>
        <taxon>Drosophila</taxon>
        <taxon>Sophophora</taxon>
    </lineage>
</organism>
<name>EIF3M_DROSI</name>
<sequence>MTSHPVFIDLSLDEQVQELRKYFKKLGAEISSEKSNKGVEDDLHKIIGVCDVCFKDGEPSQIDGILNSIVSIMITIPLDRGENIVLAYCEKMTKAPNLPLGKVCLQSLWRLFNNLDTASPLRYHVYYHLVQVAKQCEQVLEVFSGVDQLKSQFANCPPSSEQMQKLYRLLHDVTKDTNLELSSKVMIELLGTYTADNACVAREDAMKCIVTALADPNTFLLDPLLSLKPVRFLEGDLIHDLLSIFVSEKLPAYVQFYEDHREFVNSQGLNHEQNMKKMRLLTFMQLAESSPEMTFETLTKELQINEDEVEPFVIEVLKTKLVRARLDQANQKVHISSTMHRTFGAPQWEQLRDLLQAWKENLSTVREGLTSVSSAQLDLARSQKLIH</sequence>
<reference key="1">
    <citation type="journal article" date="2007" name="Nature">
        <title>Evolution of genes and genomes on the Drosophila phylogeny.</title>
        <authorList>
            <consortium name="Drosophila 12 genomes consortium"/>
        </authorList>
    </citation>
    <scope>NUCLEOTIDE SEQUENCE [LARGE SCALE GENOMIC DNA]</scope>
</reference>
<feature type="chain" id="PRO_0000366004" description="Eukaryotic translation initiation factor 3 subunit M">
    <location>
        <begin position="1"/>
        <end position="387"/>
    </location>
</feature>
<feature type="domain" description="PCI" evidence="2">
    <location>
        <begin position="181"/>
        <end position="340"/>
    </location>
</feature>
<evidence type="ECO:0000255" key="1">
    <source>
        <dbReference type="HAMAP-Rule" id="MF_03012"/>
    </source>
</evidence>
<evidence type="ECO:0000255" key="2">
    <source>
        <dbReference type="PROSITE-ProRule" id="PRU01185"/>
    </source>
</evidence>
<gene>
    <name evidence="1" type="primary">Tango7</name>
    <name type="ORF">GD25700</name>
</gene>
<dbReference type="EMBL" id="CM000362">
    <property type="protein sequence ID" value="EDX07042.1"/>
    <property type="molecule type" value="Genomic_DNA"/>
</dbReference>
<dbReference type="SMR" id="B4QFD2"/>
<dbReference type="STRING" id="7240.B4QFD2"/>
<dbReference type="EnsemblMetazoa" id="FBtr0225610">
    <property type="protein sequence ID" value="FBpp0224102"/>
    <property type="gene ID" value="FBgn0196985"/>
</dbReference>
<dbReference type="EnsemblMetazoa" id="XM_002081421.4">
    <property type="protein sequence ID" value="XP_002081457.1"/>
    <property type="gene ID" value="LOC6734437"/>
</dbReference>
<dbReference type="GeneID" id="6734437"/>
<dbReference type="CTD" id="10480"/>
<dbReference type="HOGENOM" id="CLU_035254_1_0_1"/>
<dbReference type="OMA" id="VCLKALW"/>
<dbReference type="OrthoDB" id="7900529at2759"/>
<dbReference type="PhylomeDB" id="B4QFD2"/>
<dbReference type="Proteomes" id="UP000000304">
    <property type="component" value="Chromosome 2R"/>
</dbReference>
<dbReference type="Bgee" id="FBgn0196985">
    <property type="expression patterns" value="Expressed in embryo and 3 other cell types or tissues"/>
</dbReference>
<dbReference type="GO" id="GO:0005829">
    <property type="term" value="C:cytosol"/>
    <property type="evidence" value="ECO:0007669"/>
    <property type="project" value="EnsemblMetazoa"/>
</dbReference>
<dbReference type="GO" id="GO:0016282">
    <property type="term" value="C:eukaryotic 43S preinitiation complex"/>
    <property type="evidence" value="ECO:0007669"/>
    <property type="project" value="UniProtKB-UniRule"/>
</dbReference>
<dbReference type="GO" id="GO:0033290">
    <property type="term" value="C:eukaryotic 48S preinitiation complex"/>
    <property type="evidence" value="ECO:0007669"/>
    <property type="project" value="UniProtKB-UniRule"/>
</dbReference>
<dbReference type="GO" id="GO:0071541">
    <property type="term" value="C:eukaryotic translation initiation factor 3 complex, eIF3m"/>
    <property type="evidence" value="ECO:0007669"/>
    <property type="project" value="UniProtKB-UniRule"/>
</dbReference>
<dbReference type="GO" id="GO:0005794">
    <property type="term" value="C:Golgi apparatus"/>
    <property type="evidence" value="ECO:0007669"/>
    <property type="project" value="UniProtKB-SubCell"/>
</dbReference>
<dbReference type="GO" id="GO:0070865">
    <property type="term" value="C:investment cone"/>
    <property type="evidence" value="ECO:0007669"/>
    <property type="project" value="EnsemblMetazoa"/>
</dbReference>
<dbReference type="GO" id="GO:0089720">
    <property type="term" value="F:caspase binding"/>
    <property type="evidence" value="ECO:0007669"/>
    <property type="project" value="EnsemblMetazoa"/>
</dbReference>
<dbReference type="GO" id="GO:0140608">
    <property type="term" value="F:cysteine-type endopeptidase activator activity"/>
    <property type="evidence" value="ECO:0007669"/>
    <property type="project" value="EnsemblMetazoa"/>
</dbReference>
<dbReference type="GO" id="GO:0003743">
    <property type="term" value="F:translation initiation factor activity"/>
    <property type="evidence" value="ECO:0007669"/>
    <property type="project" value="UniProtKB-UniRule"/>
</dbReference>
<dbReference type="GO" id="GO:0001732">
    <property type="term" value="P:formation of cytoplasmic translation initiation complex"/>
    <property type="evidence" value="ECO:0007669"/>
    <property type="project" value="UniProtKB-UniRule"/>
</dbReference>
<dbReference type="GO" id="GO:0007030">
    <property type="term" value="P:Golgi organization"/>
    <property type="evidence" value="ECO:0007669"/>
    <property type="project" value="EnsemblMetazoa"/>
</dbReference>
<dbReference type="GO" id="GO:0009306">
    <property type="term" value="P:protein secretion"/>
    <property type="evidence" value="ECO:0007669"/>
    <property type="project" value="EnsemblMetazoa"/>
</dbReference>
<dbReference type="GO" id="GO:0007291">
    <property type="term" value="P:sperm individualization"/>
    <property type="evidence" value="ECO:0007669"/>
    <property type="project" value="EnsemblMetazoa"/>
</dbReference>
<dbReference type="HAMAP" id="MF_03012">
    <property type="entry name" value="eIF3m"/>
    <property type="match status" value="1"/>
</dbReference>
<dbReference type="InterPro" id="IPR045237">
    <property type="entry name" value="COPS7/eIF3m"/>
</dbReference>
<dbReference type="InterPro" id="IPR027528">
    <property type="entry name" value="eIF3m"/>
</dbReference>
<dbReference type="InterPro" id="IPR040750">
    <property type="entry name" value="eIF3m_C_helix"/>
</dbReference>
<dbReference type="InterPro" id="IPR000717">
    <property type="entry name" value="PCI_dom"/>
</dbReference>
<dbReference type="InterPro" id="IPR036390">
    <property type="entry name" value="WH_DNA-bd_sf"/>
</dbReference>
<dbReference type="PANTHER" id="PTHR15350">
    <property type="entry name" value="COP9 SIGNALOSOME COMPLEX SUBUNIT 7/DENDRITIC CELL PROTEIN GA17"/>
    <property type="match status" value="1"/>
</dbReference>
<dbReference type="PANTHER" id="PTHR15350:SF2">
    <property type="entry name" value="EUKARYOTIC TRANSLATION INITIATION FACTOR 3 SUBUNIT M"/>
    <property type="match status" value="1"/>
</dbReference>
<dbReference type="Pfam" id="PF18005">
    <property type="entry name" value="eIF3m_C_helix"/>
    <property type="match status" value="1"/>
</dbReference>
<dbReference type="Pfam" id="PF01399">
    <property type="entry name" value="PCI"/>
    <property type="match status" value="1"/>
</dbReference>
<dbReference type="SMART" id="SM00088">
    <property type="entry name" value="PINT"/>
    <property type="match status" value="1"/>
</dbReference>
<dbReference type="SUPFAM" id="SSF46785">
    <property type="entry name" value="Winged helix' DNA-binding domain"/>
    <property type="match status" value="1"/>
</dbReference>
<dbReference type="PROSITE" id="PS50250">
    <property type="entry name" value="PCI"/>
    <property type="match status" value="1"/>
</dbReference>
<keyword id="KW-0963">Cytoplasm</keyword>
<keyword id="KW-0333">Golgi apparatus</keyword>
<keyword id="KW-0396">Initiation factor</keyword>
<keyword id="KW-0648">Protein biosynthesis</keyword>
<keyword id="KW-1185">Reference proteome</keyword>